<comment type="similarity">
    <text evidence="1">Belongs to the bacterial ribosomal protein bS16 family.</text>
</comment>
<organism>
    <name type="scientific">Desulfotalea psychrophila (strain LSv54 / DSM 12343)</name>
    <dbReference type="NCBI Taxonomy" id="177439"/>
    <lineage>
        <taxon>Bacteria</taxon>
        <taxon>Pseudomonadati</taxon>
        <taxon>Thermodesulfobacteriota</taxon>
        <taxon>Desulfobulbia</taxon>
        <taxon>Desulfobulbales</taxon>
        <taxon>Desulfocapsaceae</taxon>
        <taxon>Desulfotalea</taxon>
    </lineage>
</organism>
<accession>Q6AJF1</accession>
<reference key="1">
    <citation type="journal article" date="2004" name="Environ. Microbiol.">
        <title>The genome of Desulfotalea psychrophila, a sulfate-reducing bacterium from permanently cold Arctic sediments.</title>
        <authorList>
            <person name="Rabus R."/>
            <person name="Ruepp A."/>
            <person name="Frickey T."/>
            <person name="Rattei T."/>
            <person name="Fartmann B."/>
            <person name="Stark M."/>
            <person name="Bauer M."/>
            <person name="Zibat A."/>
            <person name="Lombardot T."/>
            <person name="Becker I."/>
            <person name="Amann J."/>
            <person name="Gellner K."/>
            <person name="Teeling H."/>
            <person name="Leuschner W.D."/>
            <person name="Gloeckner F.-O."/>
            <person name="Lupas A.N."/>
            <person name="Amann R."/>
            <person name="Klenk H.-P."/>
        </authorList>
    </citation>
    <scope>NUCLEOTIDE SEQUENCE [LARGE SCALE GENOMIC DNA]</scope>
    <source>
        <strain>DSM 12343 / LSv54</strain>
    </source>
</reference>
<keyword id="KW-1185">Reference proteome</keyword>
<keyword id="KW-0687">Ribonucleoprotein</keyword>
<keyword id="KW-0689">Ribosomal protein</keyword>
<gene>
    <name evidence="1" type="primary">rpsP</name>
    <name type="ordered locus">DP2800</name>
</gene>
<sequence>MAVRIRLTRLGRKKMPFYRLVVADSEAKRDGKFLDIVGTYDPMQDPAVITINDEKLQDWVGRGALPTTTVKSLLKKAAANK</sequence>
<name>RS16_DESPS</name>
<protein>
    <recommendedName>
        <fullName evidence="1">Small ribosomal subunit protein bS16</fullName>
    </recommendedName>
    <alternativeName>
        <fullName evidence="2">30S ribosomal protein S16</fullName>
    </alternativeName>
</protein>
<feature type="chain" id="PRO_0000243801" description="Small ribosomal subunit protein bS16">
    <location>
        <begin position="1"/>
        <end position="81"/>
    </location>
</feature>
<proteinExistence type="inferred from homology"/>
<evidence type="ECO:0000255" key="1">
    <source>
        <dbReference type="HAMAP-Rule" id="MF_00385"/>
    </source>
</evidence>
<evidence type="ECO:0000305" key="2"/>
<dbReference type="EMBL" id="CR522870">
    <property type="protein sequence ID" value="CAG37529.1"/>
    <property type="molecule type" value="Genomic_DNA"/>
</dbReference>
<dbReference type="RefSeq" id="WP_011190041.1">
    <property type="nucleotide sequence ID" value="NC_006138.1"/>
</dbReference>
<dbReference type="SMR" id="Q6AJF1"/>
<dbReference type="STRING" id="177439.DP2800"/>
<dbReference type="KEGG" id="dps:DP2800"/>
<dbReference type="eggNOG" id="COG0228">
    <property type="taxonomic scope" value="Bacteria"/>
</dbReference>
<dbReference type="HOGENOM" id="CLU_100590_5_0_7"/>
<dbReference type="OrthoDB" id="9807878at2"/>
<dbReference type="Proteomes" id="UP000000602">
    <property type="component" value="Chromosome"/>
</dbReference>
<dbReference type="GO" id="GO:0005737">
    <property type="term" value="C:cytoplasm"/>
    <property type="evidence" value="ECO:0007669"/>
    <property type="project" value="UniProtKB-ARBA"/>
</dbReference>
<dbReference type="GO" id="GO:0015935">
    <property type="term" value="C:small ribosomal subunit"/>
    <property type="evidence" value="ECO:0007669"/>
    <property type="project" value="TreeGrafter"/>
</dbReference>
<dbReference type="GO" id="GO:0003735">
    <property type="term" value="F:structural constituent of ribosome"/>
    <property type="evidence" value="ECO:0007669"/>
    <property type="project" value="InterPro"/>
</dbReference>
<dbReference type="GO" id="GO:0006412">
    <property type="term" value="P:translation"/>
    <property type="evidence" value="ECO:0007669"/>
    <property type="project" value="UniProtKB-UniRule"/>
</dbReference>
<dbReference type="Gene3D" id="3.30.1320.10">
    <property type="match status" value="1"/>
</dbReference>
<dbReference type="HAMAP" id="MF_00385">
    <property type="entry name" value="Ribosomal_bS16"/>
    <property type="match status" value="1"/>
</dbReference>
<dbReference type="InterPro" id="IPR000307">
    <property type="entry name" value="Ribosomal_bS16"/>
</dbReference>
<dbReference type="InterPro" id="IPR020592">
    <property type="entry name" value="Ribosomal_bS16_CS"/>
</dbReference>
<dbReference type="InterPro" id="IPR023803">
    <property type="entry name" value="Ribosomal_bS16_dom_sf"/>
</dbReference>
<dbReference type="NCBIfam" id="TIGR00002">
    <property type="entry name" value="S16"/>
    <property type="match status" value="1"/>
</dbReference>
<dbReference type="PANTHER" id="PTHR12919">
    <property type="entry name" value="30S RIBOSOMAL PROTEIN S16"/>
    <property type="match status" value="1"/>
</dbReference>
<dbReference type="PANTHER" id="PTHR12919:SF20">
    <property type="entry name" value="SMALL RIBOSOMAL SUBUNIT PROTEIN BS16M"/>
    <property type="match status" value="1"/>
</dbReference>
<dbReference type="Pfam" id="PF00886">
    <property type="entry name" value="Ribosomal_S16"/>
    <property type="match status" value="1"/>
</dbReference>
<dbReference type="SUPFAM" id="SSF54565">
    <property type="entry name" value="Ribosomal protein S16"/>
    <property type="match status" value="1"/>
</dbReference>
<dbReference type="PROSITE" id="PS00732">
    <property type="entry name" value="RIBOSOMAL_S16"/>
    <property type="match status" value="1"/>
</dbReference>